<sequence length="948" mass="102650">MNTHSDFASRHIGPQGEERREMLDSLGYRTLDELIADIVPADIRMKAPLDLPAAKSETEALEELRSILRKNKLLKTFIGQGYYGTITPSVILRNVLENPGWYTAYTPYQPEIAQGRLEMLMNFQTMVSSLTGLPVANASLLDEGTAAAEAVTMCRNARPKANTFFVADTCHPQTISVIRTRAAFQGVNIIVGDCSSFDPASIGADLAGVLVQYPDTLGRICDYTDFFSRVHATGALCVVAADLMALTVIREPGAFGADICIGNTQHFGIPMGFGGPHAAYMSCTDALKRRMPGRLIGMSIDTLGRPAYRLALQTREQHIRRDKATSNICTAQVLLAVLAAFYAVYHGQEGLKRIGTEIHLKTKSLYKALTEAGIAIENKNFFDTLLLSVPGQADAMVQKALEAGYNIRRVDADHAAISLDETATCADIAALASALAGAETSAACDCDAPAWDPVHTRQTPFCTEKAFNSYHSETEMMRYIRRLESRDLALNEAMIPLGSCTMKLNAASEMIPITWPEANSLHPFVPADQSEGIREMLSILSDRLAKITGFAAVSLQPNAGAAGEYAGLLAIRRYQKHAGEGHRNVCLIPTSAHGTNPASSAMAGLKVVPVKCDERGNIDMADLKSQAEAHKDNLSCIMVTYPSTHGVYEQTIKELCDIVHANGGQVYMDGANMNAQVGLTCPGCIGADVCHLNLHKTFAMPHGGGGPGIGPIGVAEHLVPFLPGHLTLGHEEGAVASAAWGSASIAAICWMYLSMMGPDGLREATEMAILNANYIAKKLGHLFPVLYSGNKGLVAHECILDPRQLTHDAGLTVDDIAKRLMDYGFHGPTMSFPVPGTLMVEPTESEPKKELDRFIEAMERIHAEITAIINGTADKEDNVLKNSPHTAEMVSADEWRHPYSRSEAAYPVSGLLIHKFWPYVGRVDNVYGDRNLVCTCDTVEEFSKAVEL</sequence>
<dbReference type="EC" id="1.4.4.2" evidence="1"/>
<dbReference type="EMBL" id="CP001071">
    <property type="protein sequence ID" value="ACD04286.1"/>
    <property type="molecule type" value="Genomic_DNA"/>
</dbReference>
<dbReference type="RefSeq" id="WP_012419501.1">
    <property type="nucleotide sequence ID" value="NC_010655.1"/>
</dbReference>
<dbReference type="SMR" id="B2UNH4"/>
<dbReference type="STRING" id="349741.Amuc_0448"/>
<dbReference type="PaxDb" id="349741-Amuc_0448"/>
<dbReference type="KEGG" id="amu:Amuc_0448"/>
<dbReference type="eggNOG" id="COG0403">
    <property type="taxonomic scope" value="Bacteria"/>
</dbReference>
<dbReference type="eggNOG" id="COG1003">
    <property type="taxonomic scope" value="Bacteria"/>
</dbReference>
<dbReference type="HOGENOM" id="CLU_004620_3_0_0"/>
<dbReference type="OrthoDB" id="9801272at2"/>
<dbReference type="BioCyc" id="AMUC349741:G1GBX-494-MONOMER"/>
<dbReference type="Proteomes" id="UP000001031">
    <property type="component" value="Chromosome"/>
</dbReference>
<dbReference type="GO" id="GO:0005829">
    <property type="term" value="C:cytosol"/>
    <property type="evidence" value="ECO:0007669"/>
    <property type="project" value="TreeGrafter"/>
</dbReference>
<dbReference type="GO" id="GO:0005960">
    <property type="term" value="C:glycine cleavage complex"/>
    <property type="evidence" value="ECO:0007669"/>
    <property type="project" value="TreeGrafter"/>
</dbReference>
<dbReference type="GO" id="GO:0016594">
    <property type="term" value="F:glycine binding"/>
    <property type="evidence" value="ECO:0007669"/>
    <property type="project" value="TreeGrafter"/>
</dbReference>
<dbReference type="GO" id="GO:0004375">
    <property type="term" value="F:glycine dehydrogenase (decarboxylating) activity"/>
    <property type="evidence" value="ECO:0007669"/>
    <property type="project" value="UniProtKB-EC"/>
</dbReference>
<dbReference type="GO" id="GO:0030170">
    <property type="term" value="F:pyridoxal phosphate binding"/>
    <property type="evidence" value="ECO:0007669"/>
    <property type="project" value="TreeGrafter"/>
</dbReference>
<dbReference type="GO" id="GO:0019464">
    <property type="term" value="P:glycine decarboxylation via glycine cleavage system"/>
    <property type="evidence" value="ECO:0007669"/>
    <property type="project" value="UniProtKB-UniRule"/>
</dbReference>
<dbReference type="CDD" id="cd00613">
    <property type="entry name" value="GDC-P"/>
    <property type="match status" value="2"/>
</dbReference>
<dbReference type="FunFam" id="3.40.640.10:FF:000005">
    <property type="entry name" value="Glycine dehydrogenase (decarboxylating), mitochondrial"/>
    <property type="match status" value="1"/>
</dbReference>
<dbReference type="FunFam" id="3.40.640.10:FF:000007">
    <property type="entry name" value="glycine dehydrogenase (Decarboxylating), mitochondrial"/>
    <property type="match status" value="1"/>
</dbReference>
<dbReference type="Gene3D" id="3.90.1150.10">
    <property type="entry name" value="Aspartate Aminotransferase, domain 1"/>
    <property type="match status" value="2"/>
</dbReference>
<dbReference type="Gene3D" id="3.40.640.10">
    <property type="entry name" value="Type I PLP-dependent aspartate aminotransferase-like (Major domain)"/>
    <property type="match status" value="2"/>
</dbReference>
<dbReference type="HAMAP" id="MF_00711">
    <property type="entry name" value="GcvP"/>
    <property type="match status" value="1"/>
</dbReference>
<dbReference type="InterPro" id="IPR003437">
    <property type="entry name" value="GcvP"/>
</dbReference>
<dbReference type="InterPro" id="IPR049316">
    <property type="entry name" value="GDC-P_C"/>
</dbReference>
<dbReference type="InterPro" id="IPR049315">
    <property type="entry name" value="GDC-P_N"/>
</dbReference>
<dbReference type="InterPro" id="IPR020581">
    <property type="entry name" value="GDC_P"/>
</dbReference>
<dbReference type="InterPro" id="IPR015424">
    <property type="entry name" value="PyrdxlP-dep_Trfase"/>
</dbReference>
<dbReference type="InterPro" id="IPR015421">
    <property type="entry name" value="PyrdxlP-dep_Trfase_major"/>
</dbReference>
<dbReference type="InterPro" id="IPR015422">
    <property type="entry name" value="PyrdxlP-dep_Trfase_small"/>
</dbReference>
<dbReference type="NCBIfam" id="TIGR00461">
    <property type="entry name" value="gcvP"/>
    <property type="match status" value="1"/>
</dbReference>
<dbReference type="NCBIfam" id="NF001696">
    <property type="entry name" value="PRK00451.1"/>
    <property type="match status" value="1"/>
</dbReference>
<dbReference type="PANTHER" id="PTHR11773:SF1">
    <property type="entry name" value="GLYCINE DEHYDROGENASE (DECARBOXYLATING), MITOCHONDRIAL"/>
    <property type="match status" value="1"/>
</dbReference>
<dbReference type="PANTHER" id="PTHR11773">
    <property type="entry name" value="GLYCINE DEHYDROGENASE, DECARBOXYLATING"/>
    <property type="match status" value="1"/>
</dbReference>
<dbReference type="Pfam" id="PF21478">
    <property type="entry name" value="GcvP2_C"/>
    <property type="match status" value="1"/>
</dbReference>
<dbReference type="Pfam" id="PF02347">
    <property type="entry name" value="GDC-P"/>
    <property type="match status" value="2"/>
</dbReference>
<dbReference type="SUPFAM" id="SSF53383">
    <property type="entry name" value="PLP-dependent transferases"/>
    <property type="match status" value="2"/>
</dbReference>
<accession>B2UNH4</accession>
<protein>
    <recommendedName>
        <fullName evidence="1">Glycine dehydrogenase (decarboxylating)</fullName>
        <ecNumber evidence="1">1.4.4.2</ecNumber>
    </recommendedName>
    <alternativeName>
        <fullName evidence="1">Glycine cleavage system P-protein</fullName>
    </alternativeName>
    <alternativeName>
        <fullName evidence="1">Glycine decarboxylase</fullName>
    </alternativeName>
    <alternativeName>
        <fullName evidence="1">Glycine dehydrogenase (aminomethyl-transferring)</fullName>
    </alternativeName>
</protein>
<feature type="chain" id="PRO_1000190203" description="Glycine dehydrogenase (decarboxylating)">
    <location>
        <begin position="1"/>
        <end position="948"/>
    </location>
</feature>
<feature type="modified residue" description="N6-(pyridoxal phosphate)lysine" evidence="1">
    <location>
        <position position="696"/>
    </location>
</feature>
<reference key="1">
    <citation type="journal article" date="2011" name="PLoS ONE">
        <title>The genome of Akkermansia muciniphila, a dedicated intestinal mucin degrader, and its use in exploring intestinal metagenomes.</title>
        <authorList>
            <person name="van Passel M.W."/>
            <person name="Kant R."/>
            <person name="Zoetendal E.G."/>
            <person name="Plugge C.M."/>
            <person name="Derrien M."/>
            <person name="Malfatti S.A."/>
            <person name="Chain P.S."/>
            <person name="Woyke T."/>
            <person name="Palva A."/>
            <person name="de Vos W.M."/>
            <person name="Smidt H."/>
        </authorList>
    </citation>
    <scope>NUCLEOTIDE SEQUENCE [LARGE SCALE GENOMIC DNA]</scope>
    <source>
        <strain>ATCC BAA-835 / DSM 22959 / JCM 33894 / BCRC 81048 / CCUG 64013 / CIP 107961 / Muc</strain>
    </source>
</reference>
<evidence type="ECO:0000255" key="1">
    <source>
        <dbReference type="HAMAP-Rule" id="MF_00711"/>
    </source>
</evidence>
<proteinExistence type="inferred from homology"/>
<keyword id="KW-0560">Oxidoreductase</keyword>
<keyword id="KW-0663">Pyridoxal phosphate</keyword>
<keyword id="KW-1185">Reference proteome</keyword>
<name>GCSP_AKKM8</name>
<organism>
    <name type="scientific">Akkermansia muciniphila (strain ATCC BAA-835 / DSM 22959 / JCM 33894 / BCRC 81048 / CCUG 64013 / CIP 107961 / Muc)</name>
    <dbReference type="NCBI Taxonomy" id="349741"/>
    <lineage>
        <taxon>Bacteria</taxon>
        <taxon>Pseudomonadati</taxon>
        <taxon>Verrucomicrobiota</taxon>
        <taxon>Verrucomicrobiia</taxon>
        <taxon>Verrucomicrobiales</taxon>
        <taxon>Akkermansiaceae</taxon>
        <taxon>Akkermansia</taxon>
    </lineage>
</organism>
<comment type="function">
    <text evidence="1">The glycine cleavage system catalyzes the degradation of glycine. The P protein binds the alpha-amino group of glycine through its pyridoxal phosphate cofactor; CO(2) is released and the remaining methylamine moiety is then transferred to the lipoamide cofactor of the H protein.</text>
</comment>
<comment type="catalytic activity">
    <reaction evidence="1">
        <text>N(6)-[(R)-lipoyl]-L-lysyl-[glycine-cleavage complex H protein] + glycine + H(+) = N(6)-[(R)-S(8)-aminomethyldihydrolipoyl]-L-lysyl-[glycine-cleavage complex H protein] + CO2</text>
        <dbReference type="Rhea" id="RHEA:24304"/>
        <dbReference type="Rhea" id="RHEA-COMP:10494"/>
        <dbReference type="Rhea" id="RHEA-COMP:10495"/>
        <dbReference type="ChEBI" id="CHEBI:15378"/>
        <dbReference type="ChEBI" id="CHEBI:16526"/>
        <dbReference type="ChEBI" id="CHEBI:57305"/>
        <dbReference type="ChEBI" id="CHEBI:83099"/>
        <dbReference type="ChEBI" id="CHEBI:83143"/>
        <dbReference type="EC" id="1.4.4.2"/>
    </reaction>
</comment>
<comment type="cofactor">
    <cofactor evidence="1">
        <name>pyridoxal 5'-phosphate</name>
        <dbReference type="ChEBI" id="CHEBI:597326"/>
    </cofactor>
</comment>
<comment type="subunit">
    <text evidence="1">The glycine cleavage system is composed of four proteins: P, T, L and H.</text>
</comment>
<comment type="similarity">
    <text evidence="1">Belongs to the GcvP family.</text>
</comment>
<gene>
    <name evidence="1" type="primary">gcvP</name>
    <name type="ordered locus">Amuc_0448</name>
</gene>